<sequence length="217" mass="24155">MSFLLHQSRFFTTVNHLQDLPATSQPEICFAGRSNAGKSTAINILCNQKRLAFASKTPGRTQHINYFSVGNADEPTAHLVDLPGYGYAEVPGAAKAHWEALLSAYLQSRSQLRGMILMMDSRRPLTDLDRRMIEWFVPTGKPIHTLLTKCDKLTRQESVNALRATQKGLAEYRAAGYRGELTAQLFSALKRIGIDEAHALIESWLIPEAKGETDTPQ</sequence>
<proteinExistence type="inferred from homology"/>
<protein>
    <recommendedName>
        <fullName evidence="1">Probable GTP-binding protein EngB</fullName>
    </recommendedName>
</protein>
<keyword id="KW-0131">Cell cycle</keyword>
<keyword id="KW-0132">Cell division</keyword>
<keyword id="KW-0342">GTP-binding</keyword>
<keyword id="KW-0460">Magnesium</keyword>
<keyword id="KW-0479">Metal-binding</keyword>
<keyword id="KW-0547">Nucleotide-binding</keyword>
<keyword id="KW-1185">Reference proteome</keyword>
<keyword id="KW-0717">Septation</keyword>
<dbReference type="EMBL" id="CP000270">
    <property type="protein sequence ID" value="ABE32588.1"/>
    <property type="molecule type" value="Genomic_DNA"/>
</dbReference>
<dbReference type="RefSeq" id="WP_011490044.1">
    <property type="nucleotide sequence ID" value="NC_007951.1"/>
</dbReference>
<dbReference type="SMR" id="Q13TK1"/>
<dbReference type="STRING" id="266265.Bxe_A0345"/>
<dbReference type="KEGG" id="bxb:DR64_2515"/>
<dbReference type="KEGG" id="bxe:Bxe_A0345"/>
<dbReference type="PATRIC" id="fig|266265.5.peg.4280"/>
<dbReference type="eggNOG" id="COG0218">
    <property type="taxonomic scope" value="Bacteria"/>
</dbReference>
<dbReference type="OrthoDB" id="9804921at2"/>
<dbReference type="Proteomes" id="UP000001817">
    <property type="component" value="Chromosome 1"/>
</dbReference>
<dbReference type="GO" id="GO:0005829">
    <property type="term" value="C:cytosol"/>
    <property type="evidence" value="ECO:0007669"/>
    <property type="project" value="TreeGrafter"/>
</dbReference>
<dbReference type="GO" id="GO:0005525">
    <property type="term" value="F:GTP binding"/>
    <property type="evidence" value="ECO:0007669"/>
    <property type="project" value="UniProtKB-UniRule"/>
</dbReference>
<dbReference type="GO" id="GO:0046872">
    <property type="term" value="F:metal ion binding"/>
    <property type="evidence" value="ECO:0007669"/>
    <property type="project" value="UniProtKB-KW"/>
</dbReference>
<dbReference type="GO" id="GO:0000917">
    <property type="term" value="P:division septum assembly"/>
    <property type="evidence" value="ECO:0007669"/>
    <property type="project" value="UniProtKB-KW"/>
</dbReference>
<dbReference type="CDD" id="cd01876">
    <property type="entry name" value="YihA_EngB"/>
    <property type="match status" value="1"/>
</dbReference>
<dbReference type="FunFam" id="3.40.50.300:FF:000098">
    <property type="entry name" value="Probable GTP-binding protein EngB"/>
    <property type="match status" value="1"/>
</dbReference>
<dbReference type="Gene3D" id="3.40.50.300">
    <property type="entry name" value="P-loop containing nucleotide triphosphate hydrolases"/>
    <property type="match status" value="1"/>
</dbReference>
<dbReference type="HAMAP" id="MF_00321">
    <property type="entry name" value="GTPase_EngB"/>
    <property type="match status" value="1"/>
</dbReference>
<dbReference type="InterPro" id="IPR030393">
    <property type="entry name" value="G_ENGB_dom"/>
</dbReference>
<dbReference type="InterPro" id="IPR006073">
    <property type="entry name" value="GTP-bd"/>
</dbReference>
<dbReference type="InterPro" id="IPR019987">
    <property type="entry name" value="GTP-bd_ribosome_bio_YsxC"/>
</dbReference>
<dbReference type="InterPro" id="IPR027417">
    <property type="entry name" value="P-loop_NTPase"/>
</dbReference>
<dbReference type="NCBIfam" id="TIGR03598">
    <property type="entry name" value="GTPase_YsxC"/>
    <property type="match status" value="1"/>
</dbReference>
<dbReference type="PANTHER" id="PTHR11649:SF13">
    <property type="entry name" value="ENGB-TYPE G DOMAIN-CONTAINING PROTEIN"/>
    <property type="match status" value="1"/>
</dbReference>
<dbReference type="PANTHER" id="PTHR11649">
    <property type="entry name" value="MSS1/TRME-RELATED GTP-BINDING PROTEIN"/>
    <property type="match status" value="1"/>
</dbReference>
<dbReference type="Pfam" id="PF01926">
    <property type="entry name" value="MMR_HSR1"/>
    <property type="match status" value="1"/>
</dbReference>
<dbReference type="SUPFAM" id="SSF52540">
    <property type="entry name" value="P-loop containing nucleoside triphosphate hydrolases"/>
    <property type="match status" value="1"/>
</dbReference>
<dbReference type="PROSITE" id="PS51706">
    <property type="entry name" value="G_ENGB"/>
    <property type="match status" value="1"/>
</dbReference>
<name>ENGB_PARXL</name>
<accession>Q13TK1</accession>
<gene>
    <name evidence="1" type="primary">engB</name>
    <name type="ordered locus">Bxeno_A4050</name>
    <name type="ORF">Bxe_A0345</name>
</gene>
<organism>
    <name type="scientific">Paraburkholderia xenovorans (strain LB400)</name>
    <dbReference type="NCBI Taxonomy" id="266265"/>
    <lineage>
        <taxon>Bacteria</taxon>
        <taxon>Pseudomonadati</taxon>
        <taxon>Pseudomonadota</taxon>
        <taxon>Betaproteobacteria</taxon>
        <taxon>Burkholderiales</taxon>
        <taxon>Burkholderiaceae</taxon>
        <taxon>Paraburkholderia</taxon>
    </lineage>
</organism>
<feature type="chain" id="PRO_0000266838" description="Probable GTP-binding protein EngB">
    <location>
        <begin position="1"/>
        <end position="217"/>
    </location>
</feature>
<feature type="domain" description="EngB-type G" evidence="1">
    <location>
        <begin position="24"/>
        <end position="207"/>
    </location>
</feature>
<feature type="binding site" evidence="1">
    <location>
        <begin position="32"/>
        <end position="39"/>
    </location>
    <ligand>
        <name>GTP</name>
        <dbReference type="ChEBI" id="CHEBI:37565"/>
    </ligand>
</feature>
<feature type="binding site" evidence="1">
    <location>
        <position position="39"/>
    </location>
    <ligand>
        <name>Mg(2+)</name>
        <dbReference type="ChEBI" id="CHEBI:18420"/>
    </ligand>
</feature>
<feature type="binding site" evidence="1">
    <location>
        <begin position="59"/>
        <end position="63"/>
    </location>
    <ligand>
        <name>GTP</name>
        <dbReference type="ChEBI" id="CHEBI:37565"/>
    </ligand>
</feature>
<feature type="binding site" evidence="1">
    <location>
        <position position="61"/>
    </location>
    <ligand>
        <name>Mg(2+)</name>
        <dbReference type="ChEBI" id="CHEBI:18420"/>
    </ligand>
</feature>
<feature type="binding site" evidence="1">
    <location>
        <begin position="81"/>
        <end position="84"/>
    </location>
    <ligand>
        <name>GTP</name>
        <dbReference type="ChEBI" id="CHEBI:37565"/>
    </ligand>
</feature>
<feature type="binding site" evidence="1">
    <location>
        <begin position="148"/>
        <end position="151"/>
    </location>
    <ligand>
        <name>GTP</name>
        <dbReference type="ChEBI" id="CHEBI:37565"/>
    </ligand>
</feature>
<feature type="binding site" evidence="1">
    <location>
        <begin position="185"/>
        <end position="188"/>
    </location>
    <ligand>
        <name>GTP</name>
        <dbReference type="ChEBI" id="CHEBI:37565"/>
    </ligand>
</feature>
<evidence type="ECO:0000255" key="1">
    <source>
        <dbReference type="HAMAP-Rule" id="MF_00321"/>
    </source>
</evidence>
<comment type="function">
    <text evidence="1">Necessary for normal cell division and for the maintenance of normal septation.</text>
</comment>
<comment type="cofactor">
    <cofactor evidence="1">
        <name>Mg(2+)</name>
        <dbReference type="ChEBI" id="CHEBI:18420"/>
    </cofactor>
</comment>
<comment type="similarity">
    <text evidence="1">Belongs to the TRAFAC class TrmE-Era-EngA-EngB-Septin-like GTPase superfamily. EngB GTPase family.</text>
</comment>
<reference key="1">
    <citation type="journal article" date="2006" name="Proc. Natl. Acad. Sci. U.S.A.">
        <title>Burkholderia xenovorans LB400 harbors a multi-replicon, 9.73-Mbp genome shaped for versatility.</title>
        <authorList>
            <person name="Chain P.S.G."/>
            <person name="Denef V.J."/>
            <person name="Konstantinidis K.T."/>
            <person name="Vergez L.M."/>
            <person name="Agullo L."/>
            <person name="Reyes V.L."/>
            <person name="Hauser L."/>
            <person name="Cordova M."/>
            <person name="Gomez L."/>
            <person name="Gonzalez M."/>
            <person name="Land M."/>
            <person name="Lao V."/>
            <person name="Larimer F."/>
            <person name="LiPuma J.J."/>
            <person name="Mahenthiralingam E."/>
            <person name="Malfatti S.A."/>
            <person name="Marx C.J."/>
            <person name="Parnell J.J."/>
            <person name="Ramette A."/>
            <person name="Richardson P."/>
            <person name="Seeger M."/>
            <person name="Smith D."/>
            <person name="Spilker T."/>
            <person name="Sul W.J."/>
            <person name="Tsoi T.V."/>
            <person name="Ulrich L.E."/>
            <person name="Zhulin I.B."/>
            <person name="Tiedje J.M."/>
        </authorList>
    </citation>
    <scope>NUCLEOTIDE SEQUENCE [LARGE SCALE GENOMIC DNA]</scope>
    <source>
        <strain>LB400</strain>
    </source>
</reference>